<reference key="1">
    <citation type="journal article" date="2002" name="Nature">
        <title>Genome sequence of the plant pathogen Ralstonia solanacearum.</title>
        <authorList>
            <person name="Salanoubat M."/>
            <person name="Genin S."/>
            <person name="Artiguenave F."/>
            <person name="Gouzy J."/>
            <person name="Mangenot S."/>
            <person name="Arlat M."/>
            <person name="Billault A."/>
            <person name="Brottier P."/>
            <person name="Camus J.-C."/>
            <person name="Cattolico L."/>
            <person name="Chandler M."/>
            <person name="Choisne N."/>
            <person name="Claudel-Renard C."/>
            <person name="Cunnac S."/>
            <person name="Demange N."/>
            <person name="Gaspin C."/>
            <person name="Lavie M."/>
            <person name="Moisan A."/>
            <person name="Robert C."/>
            <person name="Saurin W."/>
            <person name="Schiex T."/>
            <person name="Siguier P."/>
            <person name="Thebault P."/>
            <person name="Whalen M."/>
            <person name="Wincker P."/>
            <person name="Levy M."/>
            <person name="Weissenbach J."/>
            <person name="Boucher C.A."/>
        </authorList>
    </citation>
    <scope>NUCLEOTIDE SEQUENCE [LARGE SCALE GENOMIC DNA]</scope>
    <source>
        <strain>ATCC BAA-1114 / GMI1000</strain>
    </source>
</reference>
<proteinExistence type="inferred from homology"/>
<keyword id="KW-0963">Cytoplasm</keyword>
<keyword id="KW-0210">Decarboxylase</keyword>
<keyword id="KW-0312">Gluconeogenesis</keyword>
<keyword id="KW-0342">GTP-binding</keyword>
<keyword id="KW-0456">Lyase</keyword>
<keyword id="KW-0464">Manganese</keyword>
<keyword id="KW-0479">Metal-binding</keyword>
<keyword id="KW-0547">Nucleotide-binding</keyword>
<keyword id="KW-1185">Reference proteome</keyword>
<evidence type="ECO:0000255" key="1">
    <source>
        <dbReference type="HAMAP-Rule" id="MF_00452"/>
    </source>
</evidence>
<evidence type="ECO:0000256" key="2">
    <source>
        <dbReference type="SAM" id="MobiDB-lite"/>
    </source>
</evidence>
<accession>Q8Y3G3</accession>
<protein>
    <recommendedName>
        <fullName evidence="1">Phosphoenolpyruvate carboxykinase [GTP]</fullName>
        <shortName evidence="1">PEP carboxykinase</shortName>
        <shortName evidence="1">PEPCK</shortName>
        <ecNumber evidence="1">4.1.1.32</ecNumber>
    </recommendedName>
</protein>
<dbReference type="EC" id="4.1.1.32" evidence="1"/>
<dbReference type="EMBL" id="AL646052">
    <property type="protein sequence ID" value="CAD13545.1"/>
    <property type="molecule type" value="Genomic_DNA"/>
</dbReference>
<dbReference type="RefSeq" id="WP_010999984.1">
    <property type="nucleotide sequence ID" value="NC_003295.1"/>
</dbReference>
<dbReference type="SMR" id="Q8Y3G3"/>
<dbReference type="STRING" id="267608.RSc0017"/>
<dbReference type="EnsemblBacteria" id="CAD13545">
    <property type="protein sequence ID" value="CAD13545"/>
    <property type="gene ID" value="RSc0017"/>
</dbReference>
<dbReference type="KEGG" id="rso:RSc0017"/>
<dbReference type="eggNOG" id="COG1274">
    <property type="taxonomic scope" value="Bacteria"/>
</dbReference>
<dbReference type="HOGENOM" id="CLU_028872_1_1_4"/>
<dbReference type="UniPathway" id="UPA00138"/>
<dbReference type="Proteomes" id="UP000001436">
    <property type="component" value="Chromosome"/>
</dbReference>
<dbReference type="GO" id="GO:0005829">
    <property type="term" value="C:cytosol"/>
    <property type="evidence" value="ECO:0007669"/>
    <property type="project" value="TreeGrafter"/>
</dbReference>
<dbReference type="GO" id="GO:0005525">
    <property type="term" value="F:GTP binding"/>
    <property type="evidence" value="ECO:0007669"/>
    <property type="project" value="UniProtKB-UniRule"/>
</dbReference>
<dbReference type="GO" id="GO:0030145">
    <property type="term" value="F:manganese ion binding"/>
    <property type="evidence" value="ECO:0007669"/>
    <property type="project" value="UniProtKB-UniRule"/>
</dbReference>
<dbReference type="GO" id="GO:0004613">
    <property type="term" value="F:phosphoenolpyruvate carboxykinase (GTP) activity"/>
    <property type="evidence" value="ECO:0007669"/>
    <property type="project" value="UniProtKB-UniRule"/>
</dbReference>
<dbReference type="GO" id="GO:0071333">
    <property type="term" value="P:cellular response to glucose stimulus"/>
    <property type="evidence" value="ECO:0007669"/>
    <property type="project" value="TreeGrafter"/>
</dbReference>
<dbReference type="GO" id="GO:0006094">
    <property type="term" value="P:gluconeogenesis"/>
    <property type="evidence" value="ECO:0007669"/>
    <property type="project" value="UniProtKB-UniRule"/>
</dbReference>
<dbReference type="GO" id="GO:0046327">
    <property type="term" value="P:glycerol biosynthetic process from pyruvate"/>
    <property type="evidence" value="ECO:0007669"/>
    <property type="project" value="TreeGrafter"/>
</dbReference>
<dbReference type="GO" id="GO:0006107">
    <property type="term" value="P:oxaloacetate metabolic process"/>
    <property type="evidence" value="ECO:0007669"/>
    <property type="project" value="TreeGrafter"/>
</dbReference>
<dbReference type="GO" id="GO:0019543">
    <property type="term" value="P:propionate catabolic process"/>
    <property type="evidence" value="ECO:0007669"/>
    <property type="project" value="TreeGrafter"/>
</dbReference>
<dbReference type="GO" id="GO:0033993">
    <property type="term" value="P:response to lipid"/>
    <property type="evidence" value="ECO:0007669"/>
    <property type="project" value="TreeGrafter"/>
</dbReference>
<dbReference type="GO" id="GO:0042594">
    <property type="term" value="P:response to starvation"/>
    <property type="evidence" value="ECO:0007669"/>
    <property type="project" value="TreeGrafter"/>
</dbReference>
<dbReference type="CDD" id="cd00819">
    <property type="entry name" value="PEPCK_GTP"/>
    <property type="match status" value="1"/>
</dbReference>
<dbReference type="FunFam" id="3.40.449.10:FF:000005">
    <property type="entry name" value="Phosphoenolpyruvate carboxykinase [GTP]"/>
    <property type="match status" value="1"/>
</dbReference>
<dbReference type="Gene3D" id="3.90.228.20">
    <property type="match status" value="1"/>
</dbReference>
<dbReference type="Gene3D" id="3.40.449.10">
    <property type="entry name" value="Phosphoenolpyruvate Carboxykinase, domain 1"/>
    <property type="match status" value="1"/>
</dbReference>
<dbReference type="Gene3D" id="2.170.8.10">
    <property type="entry name" value="Phosphoenolpyruvate Carboxykinase, domain 2"/>
    <property type="match status" value="1"/>
</dbReference>
<dbReference type="HAMAP" id="MF_00452">
    <property type="entry name" value="PEPCK_GTP"/>
    <property type="match status" value="1"/>
</dbReference>
<dbReference type="InterPro" id="IPR018091">
    <property type="entry name" value="PEP_carboxykin_GTP_CS"/>
</dbReference>
<dbReference type="InterPro" id="IPR013035">
    <property type="entry name" value="PEP_carboxykinase_C"/>
</dbReference>
<dbReference type="InterPro" id="IPR008209">
    <property type="entry name" value="PEP_carboxykinase_GTP"/>
</dbReference>
<dbReference type="InterPro" id="IPR035077">
    <property type="entry name" value="PEP_carboxykinase_GTP_C"/>
</dbReference>
<dbReference type="InterPro" id="IPR035078">
    <property type="entry name" value="PEP_carboxykinase_GTP_N"/>
</dbReference>
<dbReference type="InterPro" id="IPR008210">
    <property type="entry name" value="PEP_carboxykinase_N"/>
</dbReference>
<dbReference type="NCBIfam" id="NF003253">
    <property type="entry name" value="PRK04210.1"/>
    <property type="match status" value="1"/>
</dbReference>
<dbReference type="PANTHER" id="PTHR11561">
    <property type="entry name" value="PHOSPHOENOLPYRUVATE CARBOXYKINASE"/>
    <property type="match status" value="1"/>
</dbReference>
<dbReference type="PANTHER" id="PTHR11561:SF0">
    <property type="entry name" value="PHOSPHOENOLPYRUVATE CARBOXYKINASE [GTP]-RELATED"/>
    <property type="match status" value="1"/>
</dbReference>
<dbReference type="Pfam" id="PF00821">
    <property type="entry name" value="PEPCK_GTP"/>
    <property type="match status" value="1"/>
</dbReference>
<dbReference type="Pfam" id="PF17297">
    <property type="entry name" value="PEPCK_N"/>
    <property type="match status" value="1"/>
</dbReference>
<dbReference type="PIRSF" id="PIRSF001348">
    <property type="entry name" value="PEP_carboxykinase_GTP"/>
    <property type="match status" value="1"/>
</dbReference>
<dbReference type="SUPFAM" id="SSF68923">
    <property type="entry name" value="PEP carboxykinase N-terminal domain"/>
    <property type="match status" value="1"/>
</dbReference>
<dbReference type="SUPFAM" id="SSF53795">
    <property type="entry name" value="PEP carboxykinase-like"/>
    <property type="match status" value="1"/>
</dbReference>
<dbReference type="PROSITE" id="PS00505">
    <property type="entry name" value="PEPCK_GTP"/>
    <property type="match status" value="1"/>
</dbReference>
<sequence>MNQPVMQGVPALNVPAYVKHARLVAWVSEIAALTKPERVVWCDGSQEEYDRLCAEMVAAGTLKQLNPAKRKNSYLALSDPSDVARVEDRTFICSQKQEDAGPTNNWTAPAEMRQTLNGLFDGCMRGRTLYVVPFSMGPLGSPIAHIGVELSDSPYVAVNMRIMTRMGRAVYDVLGADGEFVPCVHTVGKPLAAGEQDVPWPCNPTKYIVHFPETREIWSFGSGYGGNALLGKKCFALRIASTMGRDQGWLAEHMLILGVTSPEGKTYHVAAAFPSACGKTNFAMLIPPAGFDGWKVTTIGDDIAWIKPRQDANGQTRLYAINPEAGFFGVAPGTGEKTNFNAMATLKENVIFTNVALTDDGDVWWEGMTDTPPAHLTDWQGQDWTPAIAKETGRKAAHPNSRFTAPAAQCPSIDPEWDNPAGVAIDAFIFGGRRSTTVPLVTEARDWTEGVYMAATMGSETTAAAVGQQGVVRRDPFAMLPFCGYNMADYFAHWLKLGDQLAKSGAELPKIFCVNWFRKDEQGRFVWPGFGENMRVLKWMIDRIEGQARGDEHVFGVSPRYEELRWDGLDFSAEQFAKVISLDAQAWQQELTLHAELFAQLAHHLPQALPEAKARLEARLQG</sequence>
<feature type="chain" id="PRO_0000103613" description="Phosphoenolpyruvate carboxykinase [GTP]">
    <location>
        <begin position="1"/>
        <end position="622"/>
    </location>
</feature>
<feature type="region of interest" description="Disordered" evidence="2">
    <location>
        <begin position="395"/>
        <end position="414"/>
    </location>
</feature>
<feature type="active site" evidence="1">
    <location>
        <position position="277"/>
    </location>
</feature>
<feature type="binding site" evidence="1">
    <location>
        <position position="85"/>
    </location>
    <ligand>
        <name>substrate</name>
    </ligand>
</feature>
<feature type="binding site" evidence="1">
    <location>
        <begin position="224"/>
        <end position="226"/>
    </location>
    <ligand>
        <name>substrate</name>
    </ligand>
</feature>
<feature type="binding site" evidence="1">
    <location>
        <position position="233"/>
    </location>
    <ligand>
        <name>Mn(2+)</name>
        <dbReference type="ChEBI" id="CHEBI:29035"/>
    </ligand>
</feature>
<feature type="binding site" evidence="1">
    <location>
        <position position="253"/>
    </location>
    <ligand>
        <name>Mn(2+)</name>
        <dbReference type="ChEBI" id="CHEBI:29035"/>
    </ligand>
</feature>
<feature type="binding site" evidence="1">
    <location>
        <position position="275"/>
    </location>
    <ligand>
        <name>substrate</name>
    </ligand>
</feature>
<feature type="binding site" evidence="1">
    <location>
        <begin position="276"/>
        <end position="281"/>
    </location>
    <ligand>
        <name>GTP</name>
        <dbReference type="ChEBI" id="CHEBI:37565"/>
    </ligand>
</feature>
<feature type="binding site" evidence="1">
    <location>
        <position position="302"/>
    </location>
    <ligand>
        <name>Mn(2+)</name>
        <dbReference type="ChEBI" id="CHEBI:29035"/>
    </ligand>
</feature>
<feature type="binding site" evidence="1">
    <location>
        <begin position="400"/>
        <end position="402"/>
    </location>
    <ligand>
        <name>substrate</name>
    </ligand>
</feature>
<feature type="binding site" evidence="1">
    <location>
        <position position="402"/>
    </location>
    <ligand>
        <name>GTP</name>
        <dbReference type="ChEBI" id="CHEBI:37565"/>
    </ligand>
</feature>
<feature type="binding site" evidence="1">
    <location>
        <position position="433"/>
    </location>
    <ligand>
        <name>GTP</name>
        <dbReference type="ChEBI" id="CHEBI:37565"/>
    </ligand>
</feature>
<feature type="binding site" evidence="1">
    <location>
        <begin position="530"/>
        <end position="533"/>
    </location>
    <ligand>
        <name>GTP</name>
        <dbReference type="ChEBI" id="CHEBI:37565"/>
    </ligand>
</feature>
<gene>
    <name evidence="1" type="primary">pckG</name>
    <name type="synonym">pckA</name>
    <name type="ordered locus">RSc0017</name>
    <name type="ORF">RS01839</name>
</gene>
<comment type="function">
    <text evidence="1">Catalyzes the conversion of oxaloacetate (OAA) to phosphoenolpyruvate (PEP), the rate-limiting step in the metabolic pathway that produces glucose from lactate and other precursors derived from the citric acid cycle.</text>
</comment>
<comment type="catalytic activity">
    <reaction evidence="1">
        <text>oxaloacetate + GTP = phosphoenolpyruvate + GDP + CO2</text>
        <dbReference type="Rhea" id="RHEA:10388"/>
        <dbReference type="ChEBI" id="CHEBI:16452"/>
        <dbReference type="ChEBI" id="CHEBI:16526"/>
        <dbReference type="ChEBI" id="CHEBI:37565"/>
        <dbReference type="ChEBI" id="CHEBI:58189"/>
        <dbReference type="ChEBI" id="CHEBI:58702"/>
        <dbReference type="EC" id="4.1.1.32"/>
    </reaction>
</comment>
<comment type="cofactor">
    <cofactor evidence="1">
        <name>Mn(2+)</name>
        <dbReference type="ChEBI" id="CHEBI:29035"/>
    </cofactor>
    <text evidence="1">Binds 1 Mn(2+) ion per subunit.</text>
</comment>
<comment type="pathway">
    <text evidence="1">Carbohydrate biosynthesis; gluconeogenesis.</text>
</comment>
<comment type="subunit">
    <text evidence="1">Monomer.</text>
</comment>
<comment type="subcellular location">
    <subcellularLocation>
        <location evidence="1">Cytoplasm</location>
    </subcellularLocation>
</comment>
<comment type="similarity">
    <text evidence="1">Belongs to the phosphoenolpyruvate carboxykinase [GTP] family.</text>
</comment>
<organism>
    <name type="scientific">Ralstonia nicotianae (strain ATCC BAA-1114 / GMI1000)</name>
    <name type="common">Ralstonia solanacearum</name>
    <dbReference type="NCBI Taxonomy" id="267608"/>
    <lineage>
        <taxon>Bacteria</taxon>
        <taxon>Pseudomonadati</taxon>
        <taxon>Pseudomonadota</taxon>
        <taxon>Betaproteobacteria</taxon>
        <taxon>Burkholderiales</taxon>
        <taxon>Burkholderiaceae</taxon>
        <taxon>Ralstonia</taxon>
        <taxon>Ralstonia solanacearum species complex</taxon>
    </lineage>
</organism>
<name>PCKG_RALN1</name>